<comment type="function">
    <text evidence="1">Component of the ERMES/MDM complex, which serves as a molecular tether to connect the endoplasmic reticulum (ER) and mitochondria. Components of this complex are involved in the control of mitochondrial shape and protein biogenesis, and function in nonvesicular lipid trafficking between the ER and mitochondria. MDM12 is required for the interaction of the ER-resident membrane protein MMM1 and the outer mitochondrial membrane-resident beta-barrel protein MDM10. The MDM12-MMM1 subcomplex functions in the major beta-barrel assembly pathway that is responsible for biogenesis of all mitochondrial outer membrane beta-barrel proteins, and acts in a late step after the SAM complex. The MDM10-MDM12-MMM1 subcomplex further acts in the TOM40-specific pathway after the action of the MDM12-MMM1 complex. Essential for establishing and maintaining the structure of mitochondria and maintenance of mtDNA nucleoids.</text>
</comment>
<comment type="subunit">
    <text evidence="1">Component of the ER-mitochondria encounter structure (ERMES) or MDM complex, composed of MMM1, MDM10, MDM12 and MDM34. A MMM1 homodimer associates with one molecule of MDM12 on each side in a pairwise head-to-tail manner, and the SMP-LTD domains of MMM1 and MDM12 generate a continuous hydrophobic tunnel for phospholipid trafficking.</text>
</comment>
<comment type="subcellular location">
    <subcellularLocation>
        <location evidence="1">Mitochondrion outer membrane</location>
        <topology evidence="1">Peripheral membrane protein</topology>
        <orientation evidence="1">Cytoplasmic side</orientation>
    </subcellularLocation>
    <subcellularLocation>
        <location evidence="1">Endoplasmic reticulum membrane</location>
        <topology evidence="1">Peripheral membrane protein</topology>
        <orientation evidence="1">Cytoplasmic side</orientation>
    </subcellularLocation>
    <text evidence="1">The ERMES/MDM complex localizes to a few discrete foci (around 10 per single cell), that represent mitochondria-endoplasmic reticulum junctions. These foci are often found next to mtDNA nucleoids.</text>
</comment>
<comment type="domain">
    <text evidence="1">The SMP-LTD domain is a barrel-like domain that can bind various types of glycerophospholipids in its interior and mediate their transfer between two adjacent bilayers.</text>
</comment>
<comment type="similarity">
    <text evidence="1">Belongs to the MDM12 family.</text>
</comment>
<evidence type="ECO:0000255" key="1">
    <source>
        <dbReference type="HAMAP-Rule" id="MF_03104"/>
    </source>
</evidence>
<evidence type="ECO:0000256" key="2">
    <source>
        <dbReference type="SAM" id="MobiDB-lite"/>
    </source>
</evidence>
<proteinExistence type="inferred from homology"/>
<gene>
    <name evidence="1" type="primary">MDM12</name>
    <name type="ORF">PADG_06794</name>
</gene>
<keyword id="KW-0256">Endoplasmic reticulum</keyword>
<keyword id="KW-0445">Lipid transport</keyword>
<keyword id="KW-0446">Lipid-binding</keyword>
<keyword id="KW-0472">Membrane</keyword>
<keyword id="KW-0496">Mitochondrion</keyword>
<keyword id="KW-1000">Mitochondrion outer membrane</keyword>
<keyword id="KW-1185">Reference proteome</keyword>
<keyword id="KW-0813">Transport</keyword>
<organism>
    <name type="scientific">Paracoccidioides brasiliensis (strain Pb18)</name>
    <dbReference type="NCBI Taxonomy" id="502780"/>
    <lineage>
        <taxon>Eukaryota</taxon>
        <taxon>Fungi</taxon>
        <taxon>Dikarya</taxon>
        <taxon>Ascomycota</taxon>
        <taxon>Pezizomycotina</taxon>
        <taxon>Eurotiomycetes</taxon>
        <taxon>Eurotiomycetidae</taxon>
        <taxon>Onygenales</taxon>
        <taxon>Ajellomycetaceae</taxon>
        <taxon>Paracoccidioides</taxon>
    </lineage>
</organism>
<dbReference type="EMBL" id="KN275965">
    <property type="protein sequence ID" value="EEH50715.2"/>
    <property type="molecule type" value="Genomic_DNA"/>
</dbReference>
<dbReference type="RefSeq" id="XP_010762094.1">
    <property type="nucleotide sequence ID" value="XM_010763792.1"/>
</dbReference>
<dbReference type="FunCoup" id="C1GHQ8">
    <property type="interactions" value="43"/>
</dbReference>
<dbReference type="STRING" id="502780.C1GHQ8"/>
<dbReference type="GeneID" id="22585436"/>
<dbReference type="KEGG" id="pbn:PADG_06794"/>
<dbReference type="VEuPathDB" id="FungiDB:PADG_06794"/>
<dbReference type="eggNOG" id="ENOG502S1MJ">
    <property type="taxonomic scope" value="Eukaryota"/>
</dbReference>
<dbReference type="HOGENOM" id="CLU_026794_0_0_1"/>
<dbReference type="InParanoid" id="C1GHQ8"/>
<dbReference type="OMA" id="KRAHFCF"/>
<dbReference type="OrthoDB" id="33278at33183"/>
<dbReference type="Proteomes" id="UP000001628">
    <property type="component" value="Unassembled WGS sequence"/>
</dbReference>
<dbReference type="GO" id="GO:0005789">
    <property type="term" value="C:endoplasmic reticulum membrane"/>
    <property type="evidence" value="ECO:0007669"/>
    <property type="project" value="UniProtKB-SubCell"/>
</dbReference>
<dbReference type="GO" id="GO:0032865">
    <property type="term" value="C:ERMES complex"/>
    <property type="evidence" value="ECO:0007669"/>
    <property type="project" value="UniProtKB-UniRule"/>
</dbReference>
<dbReference type="GO" id="GO:0008289">
    <property type="term" value="F:lipid binding"/>
    <property type="evidence" value="ECO:0007669"/>
    <property type="project" value="UniProtKB-KW"/>
</dbReference>
<dbReference type="GO" id="GO:0000002">
    <property type="term" value="P:mitochondrial genome maintenance"/>
    <property type="evidence" value="ECO:0007669"/>
    <property type="project" value="UniProtKB-UniRule"/>
</dbReference>
<dbReference type="GO" id="GO:1990456">
    <property type="term" value="P:mitochondrion-endoplasmic reticulum membrane tethering"/>
    <property type="evidence" value="ECO:0007669"/>
    <property type="project" value="TreeGrafter"/>
</dbReference>
<dbReference type="GO" id="GO:0015914">
    <property type="term" value="P:phospholipid transport"/>
    <property type="evidence" value="ECO:0007669"/>
    <property type="project" value="TreeGrafter"/>
</dbReference>
<dbReference type="GO" id="GO:0045040">
    <property type="term" value="P:protein insertion into mitochondrial outer membrane"/>
    <property type="evidence" value="ECO:0007669"/>
    <property type="project" value="UniProtKB-UniRule"/>
</dbReference>
<dbReference type="CDD" id="cd21672">
    <property type="entry name" value="SMP_Mdm12"/>
    <property type="match status" value="1"/>
</dbReference>
<dbReference type="HAMAP" id="MF_03104">
    <property type="entry name" value="Mdm12"/>
    <property type="match status" value="1"/>
</dbReference>
<dbReference type="InterPro" id="IPR027532">
    <property type="entry name" value="Mdm12"/>
</dbReference>
<dbReference type="InterPro" id="IPR031468">
    <property type="entry name" value="SMP_LBD"/>
</dbReference>
<dbReference type="PANTHER" id="PTHR28204">
    <property type="entry name" value="MITOCHONDRIAL DISTRIBUTION AND MORPHOLOGY PROTEIN 12"/>
    <property type="match status" value="1"/>
</dbReference>
<dbReference type="PANTHER" id="PTHR28204:SF1">
    <property type="entry name" value="MITOCHONDRIAL DISTRIBUTION AND MORPHOLOGY PROTEIN 12"/>
    <property type="match status" value="1"/>
</dbReference>
<dbReference type="PROSITE" id="PS51847">
    <property type="entry name" value="SMP"/>
    <property type="match status" value="1"/>
</dbReference>
<reference key="1">
    <citation type="journal article" date="2011" name="PLoS Genet.">
        <title>Comparative genomic analysis of human fungal pathogens causing paracoccidioidomycosis.</title>
        <authorList>
            <person name="Desjardins C.A."/>
            <person name="Champion M.D."/>
            <person name="Holder J.W."/>
            <person name="Muszewska A."/>
            <person name="Goldberg J."/>
            <person name="Bailao A.M."/>
            <person name="Brigido M.M."/>
            <person name="Ferreira M.E."/>
            <person name="Garcia A.M."/>
            <person name="Grynberg M."/>
            <person name="Gujja S."/>
            <person name="Heiman D.I."/>
            <person name="Henn M.R."/>
            <person name="Kodira C.D."/>
            <person name="Leon-Narvaez H."/>
            <person name="Longo L.V.G."/>
            <person name="Ma L.-J."/>
            <person name="Malavazi I."/>
            <person name="Matsuo A.L."/>
            <person name="Morais F.V."/>
            <person name="Pereira M."/>
            <person name="Rodriguez-Brito S."/>
            <person name="Sakthikumar S."/>
            <person name="Salem-Izacc S.M."/>
            <person name="Sykes S.M."/>
            <person name="Teixeira M.M."/>
            <person name="Vallejo M.C."/>
            <person name="Walter M.E."/>
            <person name="Yandava C."/>
            <person name="Young S."/>
            <person name="Zeng Q."/>
            <person name="Zucker J."/>
            <person name="Felipe M.S."/>
            <person name="Goldman G.H."/>
            <person name="Haas B.J."/>
            <person name="McEwen J.G."/>
            <person name="Nino-Vega G."/>
            <person name="Puccia R."/>
            <person name="San-Blas G."/>
            <person name="Soares C.M."/>
            <person name="Birren B.W."/>
            <person name="Cuomo C.A."/>
        </authorList>
    </citation>
    <scope>NUCLEOTIDE SEQUENCE [LARGE SCALE GENOMIC DNA]</scope>
    <source>
        <strain>Pb18</strain>
    </source>
</reference>
<feature type="chain" id="PRO_0000384299" description="Mitochondrial distribution and morphology protein 12">
    <location>
        <begin position="1"/>
        <end position="441"/>
    </location>
</feature>
<feature type="domain" description="SMP-LTD" evidence="1">
    <location>
        <begin position="1"/>
        <end position="441"/>
    </location>
</feature>
<feature type="region of interest" description="Disordered" evidence="2">
    <location>
        <begin position="180"/>
        <end position="289"/>
    </location>
</feature>
<feature type="compositionally biased region" description="Polar residues" evidence="2">
    <location>
        <begin position="226"/>
        <end position="245"/>
    </location>
</feature>
<feature type="compositionally biased region" description="Polar residues" evidence="2">
    <location>
        <begin position="253"/>
        <end position="263"/>
    </location>
</feature>
<accession>C1GHQ8</accession>
<name>MDM12_PARBD</name>
<sequence length="441" mass="48846">MSIDIDWERATSGPDGELLAERIRSFIHDKFQQMVLPRFIRSVQVTSFNFGTIPPELEIRDLTDPFPDFYEDGDEDLSVSSEEQSPMREQADRYRERIDSWQANSPGGLEVQMSGRMGFGHPLQLAPDEDGSRLHPLRSPINLGDINPYLFPRSGTPGIPGGTSNLGYFMPLSGLSGSQTPLRAVTRGNPFSGGWPDSPLENESRIGHGQGPPRRRSEVNVDAIQSRPSTANTGNTLFSRGSVSTGDPRHSHSSQTVLANNPGQAPEANDSPVSAVPPLSGTPPRRMREQKAEDFQVFCRTKYAGNISLSLTAEILLDYPMPSFVGLPLKLNITGLTFDAVAVLAYIRRRIHFCFLSPEDAYALIGPETGGGGGDTMEPNSLRRKNLSLLRKIRVESEIGRKENGKQALKNVGKVEKFVLEQVRRIFEEEFVYPSFWTFLV</sequence>
<protein>
    <recommendedName>
        <fullName evidence="1">Mitochondrial distribution and morphology protein 12</fullName>
    </recommendedName>
    <alternativeName>
        <fullName evidence="1">Mitochondrial inheritance component MDM12</fullName>
    </alternativeName>
</protein>